<feature type="chain" id="PRO_0000224158" description="Chromosome-anchoring protein RacA">
    <location>
        <begin position="1"/>
        <end position="172"/>
    </location>
</feature>
<feature type="DNA-binding region" description="H-T-H motif" evidence="1">
    <location>
        <begin position="5"/>
        <end position="25"/>
    </location>
</feature>
<feature type="region of interest" description="Disordered" evidence="2">
    <location>
        <begin position="57"/>
        <end position="76"/>
    </location>
</feature>
<feature type="region of interest" description="Disordered" evidence="2">
    <location>
        <begin position="142"/>
        <end position="172"/>
    </location>
</feature>
<feature type="coiled-coil region" evidence="1">
    <location>
        <begin position="83"/>
        <end position="146"/>
    </location>
</feature>
<feature type="compositionally biased region" description="Pro residues" evidence="2">
    <location>
        <begin position="62"/>
        <end position="71"/>
    </location>
</feature>
<feature type="compositionally biased region" description="Polar residues" evidence="2">
    <location>
        <begin position="142"/>
        <end position="151"/>
    </location>
</feature>
<proteinExistence type="inferred from homology"/>
<name>RACA_GEOKA</name>
<protein>
    <recommendedName>
        <fullName evidence="1">Chromosome-anchoring protein RacA</fullName>
    </recommendedName>
</protein>
<accession>Q5KVB2</accession>
<comment type="function">
    <text evidence="1">Required for the formation of axial filaments and for anchoring the origin regions at the cell poles in sporulating cells, thus ensuring proper chromosome segregation in the prespore. Binds in a dispersed manner throughout the chromosome but preferentially to sites clustered in the origin portion of the chromosome, causing condensation of the chromosome and its remodeling into an elongated, anchored structure.</text>
</comment>
<comment type="subcellular location">
    <subcellularLocation>
        <location evidence="1">Cytoplasm</location>
    </subcellularLocation>
    <text evidence="1">Localizes to cell poles and nucleoid.</text>
</comment>
<comment type="similarity">
    <text evidence="1">Belongs to the RacA family.</text>
</comment>
<evidence type="ECO:0000255" key="1">
    <source>
        <dbReference type="HAMAP-Rule" id="MF_01170"/>
    </source>
</evidence>
<evidence type="ECO:0000256" key="2">
    <source>
        <dbReference type="SAM" id="MobiDB-lite"/>
    </source>
</evidence>
<reference key="1">
    <citation type="journal article" date="2004" name="Nucleic Acids Res.">
        <title>Thermoadaptation trait revealed by the genome sequence of thermophilic Geobacillus kaustophilus.</title>
        <authorList>
            <person name="Takami H."/>
            <person name="Takaki Y."/>
            <person name="Chee G.-J."/>
            <person name="Nishi S."/>
            <person name="Shimamura S."/>
            <person name="Suzuki H."/>
            <person name="Matsui S."/>
            <person name="Uchiyama I."/>
        </authorList>
    </citation>
    <scope>NUCLEOTIDE SEQUENCE [LARGE SCALE GENOMIC DNA]</scope>
    <source>
        <strain>HTA426</strain>
    </source>
</reference>
<gene>
    <name evidence="1" type="primary">racA</name>
    <name type="ordered locus">GK3089</name>
</gene>
<keyword id="KW-0131">Cell cycle</keyword>
<keyword id="KW-0132">Cell division</keyword>
<keyword id="KW-0159">Chromosome partition</keyword>
<keyword id="KW-0175">Coiled coil</keyword>
<keyword id="KW-0963">Cytoplasm</keyword>
<keyword id="KW-0238">DNA-binding</keyword>
<keyword id="KW-1185">Reference proteome</keyword>
<keyword id="KW-0749">Sporulation</keyword>
<sequence length="172" mass="19764">MELKTSDVAIRLGVSPKTIQRWVRKYNIPLRRNEAGHYLFDEKTVALLERVKFEQGAAMEAPPTPKRPPTPLRNNIPIDALHESIEPEIARVSSRLDQLERQLEQKADDVVSIQLLHHRQEMEEIVARLTALEQLVARLEQQLNNRPPSSHETSDEPKQKRRGLGRVMGLFA</sequence>
<organism>
    <name type="scientific">Geobacillus kaustophilus (strain HTA426)</name>
    <dbReference type="NCBI Taxonomy" id="235909"/>
    <lineage>
        <taxon>Bacteria</taxon>
        <taxon>Bacillati</taxon>
        <taxon>Bacillota</taxon>
        <taxon>Bacilli</taxon>
        <taxon>Bacillales</taxon>
        <taxon>Anoxybacillaceae</taxon>
        <taxon>Geobacillus</taxon>
        <taxon>Geobacillus thermoleovorans group</taxon>
    </lineage>
</organism>
<dbReference type="EMBL" id="BA000043">
    <property type="protein sequence ID" value="BAD77374.1"/>
    <property type="molecule type" value="Genomic_DNA"/>
</dbReference>
<dbReference type="RefSeq" id="WP_011232559.1">
    <property type="nucleotide sequence ID" value="NC_006510.1"/>
</dbReference>
<dbReference type="SMR" id="Q5KVB2"/>
<dbReference type="STRING" id="235909.GK3089"/>
<dbReference type="KEGG" id="gka:GK3089"/>
<dbReference type="eggNOG" id="COG0789">
    <property type="taxonomic scope" value="Bacteria"/>
</dbReference>
<dbReference type="HOGENOM" id="CLU_111022_0_0_9"/>
<dbReference type="Proteomes" id="UP000001172">
    <property type="component" value="Chromosome"/>
</dbReference>
<dbReference type="GO" id="GO:0005737">
    <property type="term" value="C:cytoplasm"/>
    <property type="evidence" value="ECO:0007669"/>
    <property type="project" value="UniProtKB-SubCell"/>
</dbReference>
<dbReference type="GO" id="GO:0003690">
    <property type="term" value="F:double-stranded DNA binding"/>
    <property type="evidence" value="ECO:0007669"/>
    <property type="project" value="UniProtKB-UniRule"/>
</dbReference>
<dbReference type="GO" id="GO:0008356">
    <property type="term" value="P:asymmetric cell division"/>
    <property type="evidence" value="ECO:0007669"/>
    <property type="project" value="UniProtKB-UniRule"/>
</dbReference>
<dbReference type="GO" id="GO:0030261">
    <property type="term" value="P:chromosome condensation"/>
    <property type="evidence" value="ECO:0007669"/>
    <property type="project" value="UniProtKB-UniRule"/>
</dbReference>
<dbReference type="GO" id="GO:0007059">
    <property type="term" value="P:chromosome segregation"/>
    <property type="evidence" value="ECO:0007669"/>
    <property type="project" value="UniProtKB-UniRule"/>
</dbReference>
<dbReference type="GO" id="GO:0006355">
    <property type="term" value="P:regulation of DNA-templated transcription"/>
    <property type="evidence" value="ECO:0007669"/>
    <property type="project" value="InterPro"/>
</dbReference>
<dbReference type="GO" id="GO:0030435">
    <property type="term" value="P:sporulation resulting in formation of a cellular spore"/>
    <property type="evidence" value="ECO:0007669"/>
    <property type="project" value="UniProtKB-UniRule"/>
</dbReference>
<dbReference type="CDD" id="cd04762">
    <property type="entry name" value="HTH_MerR-trunc"/>
    <property type="match status" value="1"/>
</dbReference>
<dbReference type="Gene3D" id="1.10.1660.10">
    <property type="match status" value="1"/>
</dbReference>
<dbReference type="HAMAP" id="MF_01170">
    <property type="entry name" value="RacA"/>
    <property type="match status" value="1"/>
</dbReference>
<dbReference type="InterPro" id="IPR023522">
    <property type="entry name" value="Chrosome_anchoring_RacA"/>
</dbReference>
<dbReference type="InterPro" id="IPR009061">
    <property type="entry name" value="DNA-bd_dom_put_sf"/>
</dbReference>
<dbReference type="InterPro" id="IPR000551">
    <property type="entry name" value="MerR-type_HTH_dom"/>
</dbReference>
<dbReference type="Pfam" id="PF13411">
    <property type="entry name" value="MerR_1"/>
    <property type="match status" value="1"/>
</dbReference>
<dbReference type="SUPFAM" id="SSF46955">
    <property type="entry name" value="Putative DNA-binding domain"/>
    <property type="match status" value="1"/>
</dbReference>